<protein>
    <recommendedName>
        <fullName evidence="1">Large ribosomal subunit protein bL36c</fullName>
    </recommendedName>
    <alternativeName>
        <fullName evidence="2">50S ribosomal protein L36, chloroplastic</fullName>
    </alternativeName>
</protein>
<proteinExistence type="inferred from homology"/>
<sequence>MKKRASVRKICQKCRLTRRRGRIRVICSNPRHKKRQG</sequence>
<reference key="1">
    <citation type="journal article" date="2007" name="Mol. Biol. Evol.">
        <title>Gene relocations within chloroplast genomes of Jasminum and Menodora (Oleaceae) are due to multiple, overlapping inversions.</title>
        <authorList>
            <person name="Lee H.-L."/>
            <person name="Jansen R.K."/>
            <person name="Chumley T.W."/>
            <person name="Kim K.-J."/>
        </authorList>
    </citation>
    <scope>NUCLEOTIDE SEQUENCE [LARGE SCALE GENOMIC DNA]</scope>
</reference>
<evidence type="ECO:0000255" key="1">
    <source>
        <dbReference type="HAMAP-Rule" id="MF_00251"/>
    </source>
</evidence>
<evidence type="ECO:0000305" key="2"/>
<dbReference type="EMBL" id="DQ673255">
    <property type="protein sequence ID" value="ABG74660.1"/>
    <property type="molecule type" value="Genomic_DNA"/>
</dbReference>
<dbReference type="RefSeq" id="YP_778523.1">
    <property type="nucleotide sequence ID" value="NC_008407.1"/>
</dbReference>
<dbReference type="SMR" id="Q06R98"/>
<dbReference type="GeneID" id="4319788"/>
<dbReference type="GO" id="GO:0009507">
    <property type="term" value="C:chloroplast"/>
    <property type="evidence" value="ECO:0007669"/>
    <property type="project" value="UniProtKB-SubCell"/>
</dbReference>
<dbReference type="GO" id="GO:1990904">
    <property type="term" value="C:ribonucleoprotein complex"/>
    <property type="evidence" value="ECO:0007669"/>
    <property type="project" value="UniProtKB-KW"/>
</dbReference>
<dbReference type="GO" id="GO:0005840">
    <property type="term" value="C:ribosome"/>
    <property type="evidence" value="ECO:0007669"/>
    <property type="project" value="UniProtKB-KW"/>
</dbReference>
<dbReference type="GO" id="GO:0003735">
    <property type="term" value="F:structural constituent of ribosome"/>
    <property type="evidence" value="ECO:0007669"/>
    <property type="project" value="InterPro"/>
</dbReference>
<dbReference type="GO" id="GO:0006412">
    <property type="term" value="P:translation"/>
    <property type="evidence" value="ECO:0007669"/>
    <property type="project" value="UniProtKB-UniRule"/>
</dbReference>
<dbReference type="HAMAP" id="MF_00251">
    <property type="entry name" value="Ribosomal_bL36"/>
    <property type="match status" value="1"/>
</dbReference>
<dbReference type="InterPro" id="IPR000473">
    <property type="entry name" value="Ribosomal_bL36"/>
</dbReference>
<dbReference type="InterPro" id="IPR035977">
    <property type="entry name" value="Ribosomal_bL36_sp"/>
</dbReference>
<dbReference type="NCBIfam" id="TIGR01022">
    <property type="entry name" value="rpmJ_bact"/>
    <property type="match status" value="1"/>
</dbReference>
<dbReference type="PANTHER" id="PTHR42888">
    <property type="entry name" value="50S RIBOSOMAL PROTEIN L36, CHLOROPLASTIC"/>
    <property type="match status" value="1"/>
</dbReference>
<dbReference type="PANTHER" id="PTHR42888:SF1">
    <property type="entry name" value="LARGE RIBOSOMAL SUBUNIT PROTEIN BL36C"/>
    <property type="match status" value="1"/>
</dbReference>
<dbReference type="Pfam" id="PF00444">
    <property type="entry name" value="Ribosomal_L36"/>
    <property type="match status" value="1"/>
</dbReference>
<dbReference type="SUPFAM" id="SSF57840">
    <property type="entry name" value="Ribosomal protein L36"/>
    <property type="match status" value="1"/>
</dbReference>
<keyword id="KW-0150">Chloroplast</keyword>
<keyword id="KW-0934">Plastid</keyword>
<keyword id="KW-0687">Ribonucleoprotein</keyword>
<keyword id="KW-0689">Ribosomal protein</keyword>
<organism>
    <name type="scientific">Jasminum nudiflorum</name>
    <name type="common">Winter jasmine</name>
    <dbReference type="NCBI Taxonomy" id="126431"/>
    <lineage>
        <taxon>Eukaryota</taxon>
        <taxon>Viridiplantae</taxon>
        <taxon>Streptophyta</taxon>
        <taxon>Embryophyta</taxon>
        <taxon>Tracheophyta</taxon>
        <taxon>Spermatophyta</taxon>
        <taxon>Magnoliopsida</taxon>
        <taxon>eudicotyledons</taxon>
        <taxon>Gunneridae</taxon>
        <taxon>Pentapetalae</taxon>
        <taxon>asterids</taxon>
        <taxon>lamiids</taxon>
        <taxon>Lamiales</taxon>
        <taxon>Oleaceae</taxon>
        <taxon>Jasmineae</taxon>
        <taxon>Jasminum</taxon>
    </lineage>
</organism>
<geneLocation type="chloroplast"/>
<name>RK36_JASNU</name>
<comment type="subcellular location">
    <subcellularLocation>
        <location>Plastid</location>
        <location>Chloroplast</location>
    </subcellularLocation>
</comment>
<comment type="similarity">
    <text evidence="1">Belongs to the bacterial ribosomal protein bL36 family.</text>
</comment>
<gene>
    <name evidence="1" type="primary">rpl36</name>
    <name type="ORF">JNC0880</name>
</gene>
<accession>Q06R98</accession>
<feature type="chain" id="PRO_0000276820" description="Large ribosomal subunit protein bL36c">
    <location>
        <begin position="1"/>
        <end position="37"/>
    </location>
</feature>